<dbReference type="EC" id="6.1.1.23" evidence="1"/>
<dbReference type="EMBL" id="CP000850">
    <property type="protein sequence ID" value="ABV97698.1"/>
    <property type="molecule type" value="Genomic_DNA"/>
</dbReference>
<dbReference type="SMR" id="A8LXY1"/>
<dbReference type="STRING" id="391037.Sare_1812"/>
<dbReference type="KEGG" id="saq:Sare_1812"/>
<dbReference type="PATRIC" id="fig|391037.6.peg.1842"/>
<dbReference type="eggNOG" id="COG0173">
    <property type="taxonomic scope" value="Bacteria"/>
</dbReference>
<dbReference type="HOGENOM" id="CLU_014330_3_2_11"/>
<dbReference type="OrthoDB" id="9802326at2"/>
<dbReference type="GO" id="GO:0005737">
    <property type="term" value="C:cytoplasm"/>
    <property type="evidence" value="ECO:0007669"/>
    <property type="project" value="UniProtKB-SubCell"/>
</dbReference>
<dbReference type="GO" id="GO:0004815">
    <property type="term" value="F:aspartate-tRNA ligase activity"/>
    <property type="evidence" value="ECO:0007669"/>
    <property type="project" value="UniProtKB-UniRule"/>
</dbReference>
<dbReference type="GO" id="GO:0050560">
    <property type="term" value="F:aspartate-tRNA(Asn) ligase activity"/>
    <property type="evidence" value="ECO:0007669"/>
    <property type="project" value="UniProtKB-EC"/>
</dbReference>
<dbReference type="GO" id="GO:0005524">
    <property type="term" value="F:ATP binding"/>
    <property type="evidence" value="ECO:0007669"/>
    <property type="project" value="UniProtKB-UniRule"/>
</dbReference>
<dbReference type="GO" id="GO:0003676">
    <property type="term" value="F:nucleic acid binding"/>
    <property type="evidence" value="ECO:0007669"/>
    <property type="project" value="InterPro"/>
</dbReference>
<dbReference type="GO" id="GO:0006422">
    <property type="term" value="P:aspartyl-tRNA aminoacylation"/>
    <property type="evidence" value="ECO:0007669"/>
    <property type="project" value="UniProtKB-UniRule"/>
</dbReference>
<dbReference type="CDD" id="cd00777">
    <property type="entry name" value="AspRS_core"/>
    <property type="match status" value="1"/>
</dbReference>
<dbReference type="CDD" id="cd04317">
    <property type="entry name" value="EcAspRS_like_N"/>
    <property type="match status" value="1"/>
</dbReference>
<dbReference type="Gene3D" id="3.30.930.10">
    <property type="entry name" value="Bira Bifunctional Protein, Domain 2"/>
    <property type="match status" value="1"/>
</dbReference>
<dbReference type="Gene3D" id="3.30.1360.30">
    <property type="entry name" value="GAD-like domain"/>
    <property type="match status" value="1"/>
</dbReference>
<dbReference type="Gene3D" id="2.40.50.140">
    <property type="entry name" value="Nucleic acid-binding proteins"/>
    <property type="match status" value="1"/>
</dbReference>
<dbReference type="HAMAP" id="MF_00044">
    <property type="entry name" value="Asp_tRNA_synth_type1"/>
    <property type="match status" value="1"/>
</dbReference>
<dbReference type="InterPro" id="IPR004364">
    <property type="entry name" value="Aa-tRNA-synt_II"/>
</dbReference>
<dbReference type="InterPro" id="IPR006195">
    <property type="entry name" value="aa-tRNA-synth_II"/>
</dbReference>
<dbReference type="InterPro" id="IPR045864">
    <property type="entry name" value="aa-tRNA-synth_II/BPL/LPL"/>
</dbReference>
<dbReference type="InterPro" id="IPR004524">
    <property type="entry name" value="Asp-tRNA-ligase_1"/>
</dbReference>
<dbReference type="InterPro" id="IPR047089">
    <property type="entry name" value="Asp-tRNA-ligase_1_N"/>
</dbReference>
<dbReference type="InterPro" id="IPR002312">
    <property type="entry name" value="Asp/Asn-tRNA-synth_IIb"/>
</dbReference>
<dbReference type="InterPro" id="IPR047090">
    <property type="entry name" value="AspRS_core"/>
</dbReference>
<dbReference type="InterPro" id="IPR004115">
    <property type="entry name" value="GAD-like_sf"/>
</dbReference>
<dbReference type="InterPro" id="IPR029351">
    <property type="entry name" value="GAD_dom"/>
</dbReference>
<dbReference type="InterPro" id="IPR012340">
    <property type="entry name" value="NA-bd_OB-fold"/>
</dbReference>
<dbReference type="InterPro" id="IPR004365">
    <property type="entry name" value="NA-bd_OB_tRNA"/>
</dbReference>
<dbReference type="NCBIfam" id="TIGR00459">
    <property type="entry name" value="aspS_bact"/>
    <property type="match status" value="1"/>
</dbReference>
<dbReference type="NCBIfam" id="NF001750">
    <property type="entry name" value="PRK00476.1"/>
    <property type="match status" value="1"/>
</dbReference>
<dbReference type="PANTHER" id="PTHR22594:SF5">
    <property type="entry name" value="ASPARTATE--TRNA LIGASE, MITOCHONDRIAL"/>
    <property type="match status" value="1"/>
</dbReference>
<dbReference type="PANTHER" id="PTHR22594">
    <property type="entry name" value="ASPARTYL/LYSYL-TRNA SYNTHETASE"/>
    <property type="match status" value="1"/>
</dbReference>
<dbReference type="Pfam" id="PF02938">
    <property type="entry name" value="GAD"/>
    <property type="match status" value="1"/>
</dbReference>
<dbReference type="Pfam" id="PF00152">
    <property type="entry name" value="tRNA-synt_2"/>
    <property type="match status" value="1"/>
</dbReference>
<dbReference type="Pfam" id="PF01336">
    <property type="entry name" value="tRNA_anti-codon"/>
    <property type="match status" value="1"/>
</dbReference>
<dbReference type="PRINTS" id="PR01042">
    <property type="entry name" value="TRNASYNTHASP"/>
</dbReference>
<dbReference type="SUPFAM" id="SSF55681">
    <property type="entry name" value="Class II aaRS and biotin synthetases"/>
    <property type="match status" value="1"/>
</dbReference>
<dbReference type="SUPFAM" id="SSF55261">
    <property type="entry name" value="GAD domain-like"/>
    <property type="match status" value="1"/>
</dbReference>
<dbReference type="SUPFAM" id="SSF50249">
    <property type="entry name" value="Nucleic acid-binding proteins"/>
    <property type="match status" value="1"/>
</dbReference>
<dbReference type="PROSITE" id="PS50862">
    <property type="entry name" value="AA_TRNA_LIGASE_II"/>
    <property type="match status" value="1"/>
</dbReference>
<accession>A8LXY1</accession>
<comment type="function">
    <text evidence="1">Aspartyl-tRNA synthetase with relaxed tRNA specificity since it is able to aspartylate not only its cognate tRNA(Asp) but also tRNA(Asn). Reaction proceeds in two steps: L-aspartate is first activated by ATP to form Asp-AMP and then transferred to the acceptor end of tRNA(Asp/Asn).</text>
</comment>
<comment type="catalytic activity">
    <reaction evidence="1">
        <text>tRNA(Asx) + L-aspartate + ATP = L-aspartyl-tRNA(Asx) + AMP + diphosphate</text>
        <dbReference type="Rhea" id="RHEA:18349"/>
        <dbReference type="Rhea" id="RHEA-COMP:9710"/>
        <dbReference type="Rhea" id="RHEA-COMP:9711"/>
        <dbReference type="ChEBI" id="CHEBI:29991"/>
        <dbReference type="ChEBI" id="CHEBI:30616"/>
        <dbReference type="ChEBI" id="CHEBI:33019"/>
        <dbReference type="ChEBI" id="CHEBI:78442"/>
        <dbReference type="ChEBI" id="CHEBI:78516"/>
        <dbReference type="ChEBI" id="CHEBI:456215"/>
        <dbReference type="EC" id="6.1.1.23"/>
    </reaction>
</comment>
<comment type="subunit">
    <text evidence="1">Homodimer.</text>
</comment>
<comment type="subcellular location">
    <subcellularLocation>
        <location evidence="1">Cytoplasm</location>
    </subcellularLocation>
</comment>
<comment type="similarity">
    <text evidence="1">Belongs to the class-II aminoacyl-tRNA synthetase family. Type 1 subfamily.</text>
</comment>
<evidence type="ECO:0000255" key="1">
    <source>
        <dbReference type="HAMAP-Rule" id="MF_00044"/>
    </source>
</evidence>
<evidence type="ECO:0000256" key="2">
    <source>
        <dbReference type="SAM" id="MobiDB-lite"/>
    </source>
</evidence>
<feature type="chain" id="PRO_1000074716" description="Aspartate--tRNA(Asp/Asn) ligase">
    <location>
        <begin position="1"/>
        <end position="604"/>
    </location>
</feature>
<feature type="region of interest" description="Aspartate" evidence="1">
    <location>
        <begin position="192"/>
        <end position="195"/>
    </location>
</feature>
<feature type="region of interest" description="Disordered" evidence="2">
    <location>
        <begin position="575"/>
        <end position="604"/>
    </location>
</feature>
<feature type="compositionally biased region" description="Basic and acidic residues" evidence="2">
    <location>
        <begin position="577"/>
        <end position="587"/>
    </location>
</feature>
<feature type="compositionally biased region" description="Low complexity" evidence="2">
    <location>
        <begin position="588"/>
        <end position="604"/>
    </location>
</feature>
<feature type="binding site" evidence="1">
    <location>
        <position position="168"/>
    </location>
    <ligand>
        <name>L-aspartate</name>
        <dbReference type="ChEBI" id="CHEBI:29991"/>
    </ligand>
</feature>
<feature type="binding site" evidence="1">
    <location>
        <begin position="214"/>
        <end position="216"/>
    </location>
    <ligand>
        <name>ATP</name>
        <dbReference type="ChEBI" id="CHEBI:30616"/>
    </ligand>
</feature>
<feature type="binding site" evidence="1">
    <location>
        <position position="214"/>
    </location>
    <ligand>
        <name>L-aspartate</name>
        <dbReference type="ChEBI" id="CHEBI:29991"/>
    </ligand>
</feature>
<feature type="binding site" evidence="1">
    <location>
        <position position="223"/>
    </location>
    <ligand>
        <name>ATP</name>
        <dbReference type="ChEBI" id="CHEBI:30616"/>
    </ligand>
</feature>
<feature type="binding site" evidence="1">
    <location>
        <position position="446"/>
    </location>
    <ligand>
        <name>L-aspartate</name>
        <dbReference type="ChEBI" id="CHEBI:29991"/>
    </ligand>
</feature>
<feature type="binding site" evidence="1">
    <location>
        <position position="480"/>
    </location>
    <ligand>
        <name>ATP</name>
        <dbReference type="ChEBI" id="CHEBI:30616"/>
    </ligand>
</feature>
<feature type="binding site" evidence="1">
    <location>
        <position position="487"/>
    </location>
    <ligand>
        <name>L-aspartate</name>
        <dbReference type="ChEBI" id="CHEBI:29991"/>
    </ligand>
</feature>
<feature type="binding site" evidence="1">
    <location>
        <begin position="532"/>
        <end position="535"/>
    </location>
    <ligand>
        <name>ATP</name>
        <dbReference type="ChEBI" id="CHEBI:30616"/>
    </ligand>
</feature>
<feature type="site" description="Important for tRNA non-discrimination" evidence="1">
    <location>
        <position position="31"/>
    </location>
</feature>
<feature type="site" description="Important for tRNA non-discrimination" evidence="1">
    <location>
        <position position="76"/>
    </location>
</feature>
<sequence length="604" mass="66211">MIRTHDAGSLRATDAGTTVTLAGWVARRRDHGGVIFVDLRDGSGVAQVVLREEDAHVLRNEYCVRITGEVTRRPEGNENPELATGEVEVTADELEVLSEAAPLPLPVDDQIEAGDDIRLRYRYLDLRRSGPANALRLRSRANQIARTVLHERDFLEIETPTLTRSTPEGARDFLVPVRLQPGTWYALPQSPQLFKQLLMVGGMERYYQIARCYRDEDFRADRQPEFTQLDIEMSFVTEDDVIDLGEAIVSRLWRQLAGHQITRPIPRITWHDAMARYGSDKPDLRYGVELTELTDYLRGTRFRVFAGAIEAGGYVGAVVMPGGAAQSRKELDGWQDWAKARGAKGLAYVVLDAETGEARGPVAKNLSAEHLAGLADAVGAKPGDAIFFAAGAESRAAQELLGAARVEIARRANLVDESAWAFCWVVDAPMFERVSDSEEGGWTAVHHPFTAPNAEWVDRFEEAPDRALAYAYDIVCNGNEIGGGSIRIHRGDVQQRVFDLLGITPEQARDKFGFLLEAFKYGPPPHGGIALGWDRICMLLAGADSIREVIAFPKTRGGFDPLTSAPTPITAAQRLEAGVDARPKPEARAQAGTAGPAAPVADPT</sequence>
<protein>
    <recommendedName>
        <fullName evidence="1">Aspartate--tRNA(Asp/Asn) ligase</fullName>
        <ecNumber evidence="1">6.1.1.23</ecNumber>
    </recommendedName>
    <alternativeName>
        <fullName evidence="1">Aspartyl-tRNA synthetase</fullName>
        <shortName evidence="1">AspRS</shortName>
    </alternativeName>
    <alternativeName>
        <fullName evidence="1">Non-discriminating aspartyl-tRNA synthetase</fullName>
        <shortName evidence="1">ND-AspRS</shortName>
    </alternativeName>
</protein>
<name>SYDND_SALAI</name>
<keyword id="KW-0030">Aminoacyl-tRNA synthetase</keyword>
<keyword id="KW-0067">ATP-binding</keyword>
<keyword id="KW-0963">Cytoplasm</keyword>
<keyword id="KW-0436">Ligase</keyword>
<keyword id="KW-0547">Nucleotide-binding</keyword>
<keyword id="KW-0648">Protein biosynthesis</keyword>
<organism>
    <name type="scientific">Salinispora arenicola (strain CNS-205)</name>
    <dbReference type="NCBI Taxonomy" id="391037"/>
    <lineage>
        <taxon>Bacteria</taxon>
        <taxon>Bacillati</taxon>
        <taxon>Actinomycetota</taxon>
        <taxon>Actinomycetes</taxon>
        <taxon>Micromonosporales</taxon>
        <taxon>Micromonosporaceae</taxon>
        <taxon>Salinispora</taxon>
    </lineage>
</organism>
<gene>
    <name evidence="1" type="primary">aspS</name>
    <name type="ordered locus">Sare_1812</name>
</gene>
<reference key="1">
    <citation type="submission" date="2007-10" db="EMBL/GenBank/DDBJ databases">
        <title>Complete sequence of Salinispora arenicola CNS-205.</title>
        <authorList>
            <consortium name="US DOE Joint Genome Institute"/>
            <person name="Copeland A."/>
            <person name="Lucas S."/>
            <person name="Lapidus A."/>
            <person name="Barry K."/>
            <person name="Glavina del Rio T."/>
            <person name="Dalin E."/>
            <person name="Tice H."/>
            <person name="Pitluck S."/>
            <person name="Foster B."/>
            <person name="Schmutz J."/>
            <person name="Larimer F."/>
            <person name="Land M."/>
            <person name="Hauser L."/>
            <person name="Kyrpides N."/>
            <person name="Ivanova N."/>
            <person name="Jensen P.R."/>
            <person name="Moore B.S."/>
            <person name="Penn K."/>
            <person name="Jenkins C."/>
            <person name="Udwary D."/>
            <person name="Xiang L."/>
            <person name="Gontang E."/>
            <person name="Richardson P."/>
        </authorList>
    </citation>
    <scope>NUCLEOTIDE SEQUENCE [LARGE SCALE GENOMIC DNA]</scope>
    <source>
        <strain>CNS-205</strain>
    </source>
</reference>
<proteinExistence type="inferred from homology"/>